<keyword id="KW-0025">Alternative splicing</keyword>
<keyword id="KW-0106">Calcium</keyword>
<keyword id="KW-0479">Metal-binding</keyword>
<keyword id="KW-1185">Reference proteome</keyword>
<keyword id="KW-0677">Repeat</keyword>
<accession>Q9SGI8</accession>
<accession>Q3EBD6</accession>
<name>CML40_ARATH</name>
<feature type="chain" id="PRO_0000342964" description="Probable calcium-binding protein CML40">
    <location>
        <begin position="1"/>
        <end position="146"/>
    </location>
</feature>
<feature type="domain" description="EF-hand 1" evidence="2">
    <location>
        <begin position="7"/>
        <end position="42"/>
    </location>
</feature>
<feature type="domain" description="EF-hand 2" evidence="2">
    <location>
        <begin position="116"/>
        <end position="146"/>
    </location>
</feature>
<feature type="region of interest" description="Disordered" evidence="3">
    <location>
        <begin position="44"/>
        <end position="65"/>
    </location>
</feature>
<feature type="binding site" evidence="2">
    <location>
        <position position="129"/>
    </location>
    <ligand>
        <name>Ca(2+)</name>
        <dbReference type="ChEBI" id="CHEBI:29108"/>
    </ligand>
</feature>
<feature type="binding site" evidence="2">
    <location>
        <position position="131"/>
    </location>
    <ligand>
        <name>Ca(2+)</name>
        <dbReference type="ChEBI" id="CHEBI:29108"/>
    </ligand>
</feature>
<feature type="binding site" evidence="2">
    <location>
        <position position="133"/>
    </location>
    <ligand>
        <name>Ca(2+)</name>
        <dbReference type="ChEBI" id="CHEBI:29108"/>
    </ligand>
</feature>
<feature type="binding site" evidence="2">
    <location>
        <position position="140"/>
    </location>
    <ligand>
        <name>Ca(2+)</name>
        <dbReference type="ChEBI" id="CHEBI:29108"/>
    </ligand>
</feature>
<feature type="splice variant" id="VSP_034555" description="In isoform 2." evidence="5">
    <original>ESKSLKDCEVMISQFDINRDGIIN</original>
    <variation>KKGVIGAVEVCRQEGVAMNPEVRL</variation>
    <location>
        <begin position="114"/>
        <end position="137"/>
    </location>
</feature>
<feature type="splice variant" id="VSP_034556" description="In isoform 2." evidence="5">
    <location>
        <begin position="138"/>
        <end position="146"/>
    </location>
</feature>
<organism>
    <name type="scientific">Arabidopsis thaliana</name>
    <name type="common">Mouse-ear cress</name>
    <dbReference type="NCBI Taxonomy" id="3702"/>
    <lineage>
        <taxon>Eukaryota</taxon>
        <taxon>Viridiplantae</taxon>
        <taxon>Streptophyta</taxon>
        <taxon>Embryophyta</taxon>
        <taxon>Tracheophyta</taxon>
        <taxon>Spermatophyta</taxon>
        <taxon>Magnoliopsida</taxon>
        <taxon>eudicotyledons</taxon>
        <taxon>Gunneridae</taxon>
        <taxon>Pentapetalae</taxon>
        <taxon>rosids</taxon>
        <taxon>malvids</taxon>
        <taxon>Brassicales</taxon>
        <taxon>Brassicaceae</taxon>
        <taxon>Camelineae</taxon>
        <taxon>Arabidopsis</taxon>
    </lineage>
</organism>
<comment type="function">
    <text evidence="1">Potential calcium sensor.</text>
</comment>
<comment type="alternative products">
    <event type="alternative splicing"/>
    <isoform>
        <id>Q9SGI8-1</id>
        <name>1</name>
        <sequence type="displayed"/>
    </isoform>
    <isoform>
        <id>Q9SGI8-2</id>
        <name>2</name>
        <sequence type="described" ref="VSP_034555 VSP_034556"/>
    </isoform>
</comment>
<comment type="induction">
    <text evidence="4">By touch and during darkness conditions.</text>
</comment>
<comment type="caution">
    <text evidence="5">Although assigned as a calmodulin family member by Ref.5, it only contains EF-hand domains.</text>
</comment>
<dbReference type="EMBL" id="AC010797">
    <property type="protein sequence ID" value="AAF03455.1"/>
    <property type="molecule type" value="Genomic_DNA"/>
</dbReference>
<dbReference type="EMBL" id="CP002686">
    <property type="protein sequence ID" value="AEE73721.1"/>
    <property type="molecule type" value="Genomic_DNA"/>
</dbReference>
<dbReference type="EMBL" id="CP002686">
    <property type="protein sequence ID" value="AEE73722.1"/>
    <property type="molecule type" value="Genomic_DNA"/>
</dbReference>
<dbReference type="EMBL" id="BT004176">
    <property type="protein sequence ID" value="AAO42196.1"/>
    <property type="molecule type" value="mRNA"/>
</dbReference>
<dbReference type="EMBL" id="BT006085">
    <property type="protein sequence ID" value="AAP04070.1"/>
    <property type="molecule type" value="mRNA"/>
</dbReference>
<dbReference type="EMBL" id="AY088502">
    <property type="protein sequence ID" value="AAM66037.1"/>
    <property type="molecule type" value="mRNA"/>
</dbReference>
<dbReference type="RefSeq" id="NP_566152.1">
    <molecule id="Q9SGI8-1"/>
    <property type="nucleotide sequence ID" value="NM_111049.3"/>
</dbReference>
<dbReference type="RefSeq" id="NP_974207.1">
    <molecule id="Q9SGI8-2"/>
    <property type="nucleotide sequence ID" value="NM_202478.2"/>
</dbReference>
<dbReference type="SMR" id="Q9SGI8"/>
<dbReference type="FunCoup" id="Q9SGI8">
    <property type="interactions" value="202"/>
</dbReference>
<dbReference type="STRING" id="3702.Q9SGI8"/>
<dbReference type="iPTMnet" id="Q9SGI8"/>
<dbReference type="PaxDb" id="3702-AT3G01830.1"/>
<dbReference type="ProteomicsDB" id="241078">
    <molecule id="Q9SGI8-1"/>
</dbReference>
<dbReference type="DNASU" id="820033"/>
<dbReference type="EnsemblPlants" id="AT3G01830.1">
    <molecule id="Q9SGI8-1"/>
    <property type="protein sequence ID" value="AT3G01830.1"/>
    <property type="gene ID" value="AT3G01830"/>
</dbReference>
<dbReference type="EnsemblPlants" id="AT3G01830.2">
    <molecule id="Q9SGI8-2"/>
    <property type="protein sequence ID" value="AT3G01830.2"/>
    <property type="gene ID" value="AT3G01830"/>
</dbReference>
<dbReference type="GeneID" id="820033"/>
<dbReference type="Gramene" id="AT3G01830.1">
    <molecule id="Q9SGI8-1"/>
    <property type="protein sequence ID" value="AT3G01830.1"/>
    <property type="gene ID" value="AT3G01830"/>
</dbReference>
<dbReference type="Gramene" id="AT3G01830.2">
    <molecule id="Q9SGI8-2"/>
    <property type="protein sequence ID" value="AT3G01830.2"/>
    <property type="gene ID" value="AT3G01830"/>
</dbReference>
<dbReference type="KEGG" id="ath:AT3G01830"/>
<dbReference type="Araport" id="AT3G01830"/>
<dbReference type="TAIR" id="AT3G01830"/>
<dbReference type="eggNOG" id="KOG0027">
    <property type="taxonomic scope" value="Eukaryota"/>
</dbReference>
<dbReference type="HOGENOM" id="CLU_061288_20_6_1"/>
<dbReference type="InParanoid" id="Q9SGI8"/>
<dbReference type="OMA" id="DDKCRCL"/>
<dbReference type="OrthoDB" id="26525at2759"/>
<dbReference type="PhylomeDB" id="Q9SGI8"/>
<dbReference type="PRO" id="PR:Q9SGI8"/>
<dbReference type="Proteomes" id="UP000006548">
    <property type="component" value="Chromosome 3"/>
</dbReference>
<dbReference type="ExpressionAtlas" id="Q9SGI8">
    <property type="expression patterns" value="baseline and differential"/>
</dbReference>
<dbReference type="GO" id="GO:0005509">
    <property type="term" value="F:calcium ion binding"/>
    <property type="evidence" value="ECO:0007669"/>
    <property type="project" value="InterPro"/>
</dbReference>
<dbReference type="CDD" id="cd00051">
    <property type="entry name" value="EFh"/>
    <property type="match status" value="1"/>
</dbReference>
<dbReference type="FunFam" id="1.10.238.10:FF:000003">
    <property type="entry name" value="Calmodulin A"/>
    <property type="match status" value="1"/>
</dbReference>
<dbReference type="Gene3D" id="1.10.238.10">
    <property type="entry name" value="EF-hand"/>
    <property type="match status" value="1"/>
</dbReference>
<dbReference type="InterPro" id="IPR011992">
    <property type="entry name" value="EF-hand-dom_pair"/>
</dbReference>
<dbReference type="InterPro" id="IPR018247">
    <property type="entry name" value="EF_Hand_1_Ca_BS"/>
</dbReference>
<dbReference type="InterPro" id="IPR002048">
    <property type="entry name" value="EF_hand_dom"/>
</dbReference>
<dbReference type="InterPro" id="IPR039647">
    <property type="entry name" value="EF_hand_pair_protein_CML-like"/>
</dbReference>
<dbReference type="PANTHER" id="PTHR10891">
    <property type="entry name" value="EF-HAND CALCIUM-BINDING DOMAIN CONTAINING PROTEIN"/>
    <property type="match status" value="1"/>
</dbReference>
<dbReference type="Pfam" id="PF13833">
    <property type="entry name" value="EF-hand_8"/>
    <property type="match status" value="1"/>
</dbReference>
<dbReference type="SMART" id="SM00054">
    <property type="entry name" value="EFh"/>
    <property type="match status" value="2"/>
</dbReference>
<dbReference type="SUPFAM" id="SSF47473">
    <property type="entry name" value="EF-hand"/>
    <property type="match status" value="1"/>
</dbReference>
<dbReference type="PROSITE" id="PS00018">
    <property type="entry name" value="EF_HAND_1"/>
    <property type="match status" value="1"/>
</dbReference>
<dbReference type="PROSITE" id="PS50222">
    <property type="entry name" value="EF_HAND_2"/>
    <property type="match status" value="2"/>
</dbReference>
<sequence length="146" mass="16769">MKSENVNKRDEYQRVFSCFDKSHQGKVSVSTIERCVDAIKSGKRAVVDQEDTTNPNPEESTDDKSLELEDFVKLVEEGEEADKEKDLKEAFKLYEESEGITPKSLKRMLSLLGESKSLKDCEVMISQFDINRDGIINFDEFRAMMQ</sequence>
<evidence type="ECO:0000250" key="1"/>
<evidence type="ECO:0000255" key="2">
    <source>
        <dbReference type="PROSITE-ProRule" id="PRU00448"/>
    </source>
</evidence>
<evidence type="ECO:0000256" key="3">
    <source>
        <dbReference type="SAM" id="MobiDB-lite"/>
    </source>
</evidence>
<evidence type="ECO:0000269" key="4">
    <source>
    </source>
</evidence>
<evidence type="ECO:0000305" key="5"/>
<proteinExistence type="evidence at transcript level"/>
<reference key="1">
    <citation type="journal article" date="2000" name="Nature">
        <title>Sequence and analysis of chromosome 3 of the plant Arabidopsis thaliana.</title>
        <authorList>
            <person name="Salanoubat M."/>
            <person name="Lemcke K."/>
            <person name="Rieger M."/>
            <person name="Ansorge W."/>
            <person name="Unseld M."/>
            <person name="Fartmann B."/>
            <person name="Valle G."/>
            <person name="Bloecker H."/>
            <person name="Perez-Alonso M."/>
            <person name="Obermaier B."/>
            <person name="Delseny M."/>
            <person name="Boutry M."/>
            <person name="Grivell L.A."/>
            <person name="Mache R."/>
            <person name="Puigdomenech P."/>
            <person name="De Simone V."/>
            <person name="Choisne N."/>
            <person name="Artiguenave F."/>
            <person name="Robert C."/>
            <person name="Brottier P."/>
            <person name="Wincker P."/>
            <person name="Cattolico L."/>
            <person name="Weissenbach J."/>
            <person name="Saurin W."/>
            <person name="Quetier F."/>
            <person name="Schaefer M."/>
            <person name="Mueller-Auer S."/>
            <person name="Gabel C."/>
            <person name="Fuchs M."/>
            <person name="Benes V."/>
            <person name="Wurmbach E."/>
            <person name="Drzonek H."/>
            <person name="Erfle H."/>
            <person name="Jordan N."/>
            <person name="Bangert S."/>
            <person name="Wiedelmann R."/>
            <person name="Kranz H."/>
            <person name="Voss H."/>
            <person name="Holland R."/>
            <person name="Brandt P."/>
            <person name="Nyakatura G."/>
            <person name="Vezzi A."/>
            <person name="D'Angelo M."/>
            <person name="Pallavicini A."/>
            <person name="Toppo S."/>
            <person name="Simionati B."/>
            <person name="Conrad A."/>
            <person name="Hornischer K."/>
            <person name="Kauer G."/>
            <person name="Loehnert T.-H."/>
            <person name="Nordsiek G."/>
            <person name="Reichelt J."/>
            <person name="Scharfe M."/>
            <person name="Schoen O."/>
            <person name="Bargues M."/>
            <person name="Terol J."/>
            <person name="Climent J."/>
            <person name="Navarro P."/>
            <person name="Collado C."/>
            <person name="Perez-Perez A."/>
            <person name="Ottenwaelder B."/>
            <person name="Duchemin D."/>
            <person name="Cooke R."/>
            <person name="Laudie M."/>
            <person name="Berger-Llauro C."/>
            <person name="Purnelle B."/>
            <person name="Masuy D."/>
            <person name="de Haan M."/>
            <person name="Maarse A.C."/>
            <person name="Alcaraz J.-P."/>
            <person name="Cottet A."/>
            <person name="Casacuberta E."/>
            <person name="Monfort A."/>
            <person name="Argiriou A."/>
            <person name="Flores M."/>
            <person name="Liguori R."/>
            <person name="Vitale D."/>
            <person name="Mannhaupt G."/>
            <person name="Haase D."/>
            <person name="Schoof H."/>
            <person name="Rudd S."/>
            <person name="Zaccaria P."/>
            <person name="Mewes H.-W."/>
            <person name="Mayer K.F.X."/>
            <person name="Kaul S."/>
            <person name="Town C.D."/>
            <person name="Koo H.L."/>
            <person name="Tallon L.J."/>
            <person name="Jenkins J."/>
            <person name="Rooney T."/>
            <person name="Rizzo M."/>
            <person name="Walts A."/>
            <person name="Utterback T."/>
            <person name="Fujii C.Y."/>
            <person name="Shea T.P."/>
            <person name="Creasy T.H."/>
            <person name="Haas B."/>
            <person name="Maiti R."/>
            <person name="Wu D."/>
            <person name="Peterson J."/>
            <person name="Van Aken S."/>
            <person name="Pai G."/>
            <person name="Militscher J."/>
            <person name="Sellers P."/>
            <person name="Gill J.E."/>
            <person name="Feldblyum T.V."/>
            <person name="Preuss D."/>
            <person name="Lin X."/>
            <person name="Nierman W.C."/>
            <person name="Salzberg S.L."/>
            <person name="White O."/>
            <person name="Venter J.C."/>
            <person name="Fraser C.M."/>
            <person name="Kaneko T."/>
            <person name="Nakamura Y."/>
            <person name="Sato S."/>
            <person name="Kato T."/>
            <person name="Asamizu E."/>
            <person name="Sasamoto S."/>
            <person name="Kimura T."/>
            <person name="Idesawa K."/>
            <person name="Kawashima K."/>
            <person name="Kishida Y."/>
            <person name="Kiyokawa C."/>
            <person name="Kohara M."/>
            <person name="Matsumoto M."/>
            <person name="Matsuno A."/>
            <person name="Muraki A."/>
            <person name="Nakayama S."/>
            <person name="Nakazaki N."/>
            <person name="Shinpo S."/>
            <person name="Takeuchi C."/>
            <person name="Wada T."/>
            <person name="Watanabe A."/>
            <person name="Yamada M."/>
            <person name="Yasuda M."/>
            <person name="Tabata S."/>
        </authorList>
    </citation>
    <scope>NUCLEOTIDE SEQUENCE [LARGE SCALE GENOMIC DNA]</scope>
    <source>
        <strain>cv. Columbia</strain>
    </source>
</reference>
<reference key="2">
    <citation type="journal article" date="2017" name="Plant J.">
        <title>Araport11: a complete reannotation of the Arabidopsis thaliana reference genome.</title>
        <authorList>
            <person name="Cheng C.Y."/>
            <person name="Krishnakumar V."/>
            <person name="Chan A.P."/>
            <person name="Thibaud-Nissen F."/>
            <person name="Schobel S."/>
            <person name="Town C.D."/>
        </authorList>
    </citation>
    <scope>GENOME REANNOTATION</scope>
    <source>
        <strain>cv. Columbia</strain>
    </source>
</reference>
<reference key="3">
    <citation type="journal article" date="2003" name="Science">
        <title>Empirical analysis of transcriptional activity in the Arabidopsis genome.</title>
        <authorList>
            <person name="Yamada K."/>
            <person name="Lim J."/>
            <person name="Dale J.M."/>
            <person name="Chen H."/>
            <person name="Shinn P."/>
            <person name="Palm C.J."/>
            <person name="Southwick A.M."/>
            <person name="Wu H.C."/>
            <person name="Kim C.J."/>
            <person name="Nguyen M."/>
            <person name="Pham P.K."/>
            <person name="Cheuk R.F."/>
            <person name="Karlin-Newmann G."/>
            <person name="Liu S.X."/>
            <person name="Lam B."/>
            <person name="Sakano H."/>
            <person name="Wu T."/>
            <person name="Yu G."/>
            <person name="Miranda M."/>
            <person name="Quach H.L."/>
            <person name="Tripp M."/>
            <person name="Chang C.H."/>
            <person name="Lee J.M."/>
            <person name="Toriumi M.J."/>
            <person name="Chan M.M."/>
            <person name="Tang C.C."/>
            <person name="Onodera C.S."/>
            <person name="Deng J.M."/>
            <person name="Akiyama K."/>
            <person name="Ansari Y."/>
            <person name="Arakawa T."/>
            <person name="Banh J."/>
            <person name="Banno F."/>
            <person name="Bowser L."/>
            <person name="Brooks S.Y."/>
            <person name="Carninci P."/>
            <person name="Chao Q."/>
            <person name="Choy N."/>
            <person name="Enju A."/>
            <person name="Goldsmith A.D."/>
            <person name="Gurjal M."/>
            <person name="Hansen N.F."/>
            <person name="Hayashizaki Y."/>
            <person name="Johnson-Hopson C."/>
            <person name="Hsuan V.W."/>
            <person name="Iida K."/>
            <person name="Karnes M."/>
            <person name="Khan S."/>
            <person name="Koesema E."/>
            <person name="Ishida J."/>
            <person name="Jiang P.X."/>
            <person name="Jones T."/>
            <person name="Kawai J."/>
            <person name="Kamiya A."/>
            <person name="Meyers C."/>
            <person name="Nakajima M."/>
            <person name="Narusaka M."/>
            <person name="Seki M."/>
            <person name="Sakurai T."/>
            <person name="Satou M."/>
            <person name="Tamse R."/>
            <person name="Vaysberg M."/>
            <person name="Wallender E.K."/>
            <person name="Wong C."/>
            <person name="Yamamura Y."/>
            <person name="Yuan S."/>
            <person name="Shinozaki K."/>
            <person name="Davis R.W."/>
            <person name="Theologis A."/>
            <person name="Ecker J.R."/>
        </authorList>
    </citation>
    <scope>NUCLEOTIDE SEQUENCE [LARGE SCALE MRNA] (ISOFORM 1)</scope>
    <source>
        <strain>cv. Columbia</strain>
    </source>
</reference>
<reference key="4">
    <citation type="submission" date="2002-03" db="EMBL/GenBank/DDBJ databases">
        <title>Full-length cDNA from Arabidopsis thaliana.</title>
        <authorList>
            <person name="Brover V.V."/>
            <person name="Troukhan M.E."/>
            <person name="Alexandrov N.A."/>
            <person name="Lu Y.-P."/>
            <person name="Flavell R.B."/>
            <person name="Feldmann K.A."/>
        </authorList>
    </citation>
    <scope>NUCLEOTIDE SEQUENCE [LARGE SCALE MRNA] (ISOFORM 1)</scope>
</reference>
<reference key="5">
    <citation type="journal article" date="2003" name="New Phytol.">
        <title>Calmodulins and related potential calcium sensors of Arabidopsis.</title>
        <authorList>
            <person name="McCormack E."/>
            <person name="Braam J."/>
        </authorList>
    </citation>
    <scope>GENE FAMILY</scope>
    <scope>NOMENCLATURE</scope>
</reference>
<reference key="6">
    <citation type="journal article" date="2005" name="New Phytol.">
        <title>Genome-wide identification of touch- and darkness-regulated Arabidopsis genes: a focus on calmodulin-like and XTH genes.</title>
        <authorList>
            <person name="Lee D."/>
            <person name="Polisensky D.H."/>
            <person name="Braam J."/>
        </authorList>
    </citation>
    <scope>INDUCTION</scope>
</reference>
<protein>
    <recommendedName>
        <fullName>Probable calcium-binding protein CML40</fullName>
    </recommendedName>
    <alternativeName>
        <fullName>Calmodulin-like protein 40</fullName>
    </alternativeName>
</protein>
<gene>
    <name type="primary">CML40</name>
    <name type="ordered locus">At3g01830</name>
    <name type="ORF">F28J7.16</name>
</gene>